<name>NS7A_BCHK9</name>
<protein>
    <recommendedName>
        <fullName>Non-structural protein 7a</fullName>
        <shortName>ns7a</shortName>
    </recommendedName>
    <alternativeName>
        <fullName>Accessory protein 7a</fullName>
    </alternativeName>
</protein>
<sequence>MRFFLLLCFFLPCFQAINLGLKVLELCTTGSCISQSASCVTGDIVNVTQVDRTHVVMCADFRHIKYTDVGRTFRIKFSDVTCSWENTSPADVVFPGNHILQFTVLGVCFDNKVVGGCQNINEPCPEPHTVFHLQREDITLLELCVQAAGFNAQDVGVKYDFSLRHKNCLRYKRTLPPHEVVDEDY</sequence>
<proteinExistence type="inferred from homology"/>
<feature type="signal peptide" evidence="1">
    <location>
        <begin position="1"/>
        <end position="16"/>
    </location>
</feature>
<feature type="chain" id="PRO_0000291331" description="Non-structural protein 7a">
    <location>
        <begin position="17"/>
        <end position="185"/>
    </location>
</feature>
<evidence type="ECO:0000255" key="1"/>
<organismHost>
    <name type="scientific">Rousettus leschenaultii</name>
    <name type="common">Leschenault's rousette</name>
    <name type="synonym">Pteropus leschenaultii</name>
    <dbReference type="NCBI Taxonomy" id="9408"/>
</organismHost>
<dbReference type="EMBL" id="EF065513">
    <property type="protein sequence ID" value="ABN10916.1"/>
    <property type="molecule type" value="Genomic_RNA"/>
</dbReference>
<dbReference type="KEGG" id="vg:4836010"/>
<dbReference type="OrthoDB" id="34723at10239"/>
<dbReference type="Proteomes" id="UP000006576">
    <property type="component" value="Genome"/>
</dbReference>
<dbReference type="GO" id="GO:0039646">
    <property type="term" value="P:symbiont-mediated perturbation of host cell cycle G0/G1 transition checkpoint"/>
    <property type="evidence" value="ECO:0007669"/>
    <property type="project" value="UniProtKB-KW"/>
</dbReference>
<dbReference type="GO" id="GO:0044071">
    <property type="term" value="P:symbiont-mediated perturbation of host cell cycle progression"/>
    <property type="evidence" value="ECO:0007669"/>
    <property type="project" value="UniProtKB-KW"/>
</dbReference>
<accession>A3EXH1</accession>
<gene>
    <name type="ORF">7a</name>
</gene>
<reference key="1">
    <citation type="journal article" date="2007" name="J. Virol.">
        <title>Comparative analysis of twelve genomes of three novel group 2c and group 2d coronaviruses reveals unique group and subgroup features.</title>
        <authorList>
            <person name="Woo P.C.Y."/>
            <person name="Wang M."/>
            <person name="Lau S.K.P."/>
            <person name="Xu H.F."/>
            <person name="Poon R.W.S."/>
            <person name="Guo R."/>
            <person name="Wong B.H.L."/>
            <person name="Gao K."/>
            <person name="Tsoi H.-W."/>
            <person name="Huang Y."/>
            <person name="Li K.S.M."/>
            <person name="Lam C.S.F."/>
            <person name="Chan K.-H."/>
            <person name="Zheng B.-J."/>
            <person name="Yuen K.-Y."/>
        </authorList>
    </citation>
    <scope>NUCLEOTIDE SEQUENCE [GENOMIC RNA]</scope>
    <source>
        <strain>Isolate HKU9-1</strain>
    </source>
</reference>
<keyword id="KW-1077">G0/G1 host cell cycle checkpoint dysregulation by virus</keyword>
<keyword id="KW-0945">Host-virus interaction</keyword>
<keyword id="KW-1121">Modulation of host cell cycle by virus</keyword>
<keyword id="KW-1185">Reference proteome</keyword>
<keyword id="KW-0732">Signal</keyword>
<organism>
    <name type="scientific">Bat coronavirus HKU9</name>
    <name type="common">BtCoV</name>
    <name type="synonym">BtCoV/HKU9</name>
    <dbReference type="NCBI Taxonomy" id="694006"/>
    <lineage>
        <taxon>Viruses</taxon>
        <taxon>Riboviria</taxon>
        <taxon>Orthornavirae</taxon>
        <taxon>Pisuviricota</taxon>
        <taxon>Pisoniviricetes</taxon>
        <taxon>Nidovirales</taxon>
        <taxon>Cornidovirineae</taxon>
        <taxon>Coronaviridae</taxon>
        <taxon>Orthocoronavirinae</taxon>
        <taxon>Betacoronavirus</taxon>
        <taxon>Nobecovirus</taxon>
    </lineage>
</organism>